<accession>Q2A1D8</accession>
<feature type="chain" id="PRO_0000241178" description="Glutamyl-tRNA(Gln) amidotransferase subunit A">
    <location>
        <begin position="1"/>
        <end position="481"/>
    </location>
</feature>
<feature type="active site" description="Charge relay system" evidence="1">
    <location>
        <position position="74"/>
    </location>
</feature>
<feature type="active site" description="Charge relay system" evidence="1">
    <location>
        <position position="149"/>
    </location>
</feature>
<feature type="active site" description="Acyl-ester intermediate" evidence="1">
    <location>
        <position position="173"/>
    </location>
</feature>
<proteinExistence type="inferred from homology"/>
<dbReference type="EC" id="6.3.5.7" evidence="1"/>
<dbReference type="EMBL" id="AM233362">
    <property type="protein sequence ID" value="CAJ80281.1"/>
    <property type="molecule type" value="Genomic_DNA"/>
</dbReference>
<dbReference type="RefSeq" id="WP_003017412.1">
    <property type="nucleotide sequence ID" value="NZ_CP009694.1"/>
</dbReference>
<dbReference type="SMR" id="Q2A1D8"/>
<dbReference type="KEGG" id="ftl:FTL_1842"/>
<dbReference type="Proteomes" id="UP000001944">
    <property type="component" value="Chromosome"/>
</dbReference>
<dbReference type="GO" id="GO:0030956">
    <property type="term" value="C:glutamyl-tRNA(Gln) amidotransferase complex"/>
    <property type="evidence" value="ECO:0007669"/>
    <property type="project" value="InterPro"/>
</dbReference>
<dbReference type="GO" id="GO:0005524">
    <property type="term" value="F:ATP binding"/>
    <property type="evidence" value="ECO:0007669"/>
    <property type="project" value="UniProtKB-KW"/>
</dbReference>
<dbReference type="GO" id="GO:0050567">
    <property type="term" value="F:glutaminyl-tRNA synthase (glutamine-hydrolyzing) activity"/>
    <property type="evidence" value="ECO:0007669"/>
    <property type="project" value="UniProtKB-UniRule"/>
</dbReference>
<dbReference type="GO" id="GO:0006412">
    <property type="term" value="P:translation"/>
    <property type="evidence" value="ECO:0007669"/>
    <property type="project" value="UniProtKB-UniRule"/>
</dbReference>
<dbReference type="Gene3D" id="3.90.1300.10">
    <property type="entry name" value="Amidase signature (AS) domain"/>
    <property type="match status" value="1"/>
</dbReference>
<dbReference type="HAMAP" id="MF_00120">
    <property type="entry name" value="GatA"/>
    <property type="match status" value="1"/>
</dbReference>
<dbReference type="InterPro" id="IPR000120">
    <property type="entry name" value="Amidase"/>
</dbReference>
<dbReference type="InterPro" id="IPR020556">
    <property type="entry name" value="Amidase_CS"/>
</dbReference>
<dbReference type="InterPro" id="IPR023631">
    <property type="entry name" value="Amidase_dom"/>
</dbReference>
<dbReference type="InterPro" id="IPR036928">
    <property type="entry name" value="AS_sf"/>
</dbReference>
<dbReference type="InterPro" id="IPR004412">
    <property type="entry name" value="GatA"/>
</dbReference>
<dbReference type="NCBIfam" id="TIGR00132">
    <property type="entry name" value="gatA"/>
    <property type="match status" value="1"/>
</dbReference>
<dbReference type="PANTHER" id="PTHR11895:SF151">
    <property type="entry name" value="GLUTAMYL-TRNA(GLN) AMIDOTRANSFERASE SUBUNIT A"/>
    <property type="match status" value="1"/>
</dbReference>
<dbReference type="PANTHER" id="PTHR11895">
    <property type="entry name" value="TRANSAMIDASE"/>
    <property type="match status" value="1"/>
</dbReference>
<dbReference type="Pfam" id="PF01425">
    <property type="entry name" value="Amidase"/>
    <property type="match status" value="1"/>
</dbReference>
<dbReference type="SUPFAM" id="SSF75304">
    <property type="entry name" value="Amidase signature (AS) enzymes"/>
    <property type="match status" value="1"/>
</dbReference>
<dbReference type="PROSITE" id="PS00571">
    <property type="entry name" value="AMIDASES"/>
    <property type="match status" value="1"/>
</dbReference>
<organism>
    <name type="scientific">Francisella tularensis subsp. holarctica (strain LVS)</name>
    <dbReference type="NCBI Taxonomy" id="376619"/>
    <lineage>
        <taxon>Bacteria</taxon>
        <taxon>Pseudomonadati</taxon>
        <taxon>Pseudomonadota</taxon>
        <taxon>Gammaproteobacteria</taxon>
        <taxon>Thiotrichales</taxon>
        <taxon>Francisellaceae</taxon>
        <taxon>Francisella</taxon>
    </lineage>
</organism>
<evidence type="ECO:0000255" key="1">
    <source>
        <dbReference type="HAMAP-Rule" id="MF_00120"/>
    </source>
</evidence>
<reference key="1">
    <citation type="submission" date="2006-03" db="EMBL/GenBank/DDBJ databases">
        <title>Complete genome sequence of Francisella tularensis LVS (Live Vaccine Strain).</title>
        <authorList>
            <person name="Chain P."/>
            <person name="Larimer F."/>
            <person name="Land M."/>
            <person name="Stilwagen S."/>
            <person name="Larsson P."/>
            <person name="Bearden S."/>
            <person name="Chu M."/>
            <person name="Oyston P."/>
            <person name="Forsman M."/>
            <person name="Andersson S."/>
            <person name="Lindler L."/>
            <person name="Titball R."/>
            <person name="Garcia E."/>
        </authorList>
    </citation>
    <scope>NUCLEOTIDE SEQUENCE [LARGE SCALE GENOMIC DNA]</scope>
    <source>
        <strain>LVS</strain>
    </source>
</reference>
<comment type="function">
    <text evidence="1">Allows the formation of correctly charged Gln-tRNA(Gln) through the transamidation of misacylated Glu-tRNA(Gln) in organisms which lack glutaminyl-tRNA synthetase. The reaction takes place in the presence of glutamine and ATP through an activated gamma-phospho-Glu-tRNA(Gln).</text>
</comment>
<comment type="catalytic activity">
    <reaction evidence="1">
        <text>L-glutamyl-tRNA(Gln) + L-glutamine + ATP + H2O = L-glutaminyl-tRNA(Gln) + L-glutamate + ADP + phosphate + H(+)</text>
        <dbReference type="Rhea" id="RHEA:17521"/>
        <dbReference type="Rhea" id="RHEA-COMP:9681"/>
        <dbReference type="Rhea" id="RHEA-COMP:9684"/>
        <dbReference type="ChEBI" id="CHEBI:15377"/>
        <dbReference type="ChEBI" id="CHEBI:15378"/>
        <dbReference type="ChEBI" id="CHEBI:29985"/>
        <dbReference type="ChEBI" id="CHEBI:30616"/>
        <dbReference type="ChEBI" id="CHEBI:43474"/>
        <dbReference type="ChEBI" id="CHEBI:58359"/>
        <dbReference type="ChEBI" id="CHEBI:78520"/>
        <dbReference type="ChEBI" id="CHEBI:78521"/>
        <dbReference type="ChEBI" id="CHEBI:456216"/>
        <dbReference type="EC" id="6.3.5.7"/>
    </reaction>
</comment>
<comment type="subunit">
    <text evidence="1">Heterotrimer of A, B and C subunits.</text>
</comment>
<comment type="similarity">
    <text evidence="1">Belongs to the amidase family. GatA subfamily.</text>
</comment>
<gene>
    <name evidence="1" type="primary">gatA</name>
    <name type="ordered locus">FTL_1842</name>
</gene>
<protein>
    <recommendedName>
        <fullName evidence="1">Glutamyl-tRNA(Gln) amidotransferase subunit A</fullName>
        <shortName evidence="1">Glu-ADT subunit A</shortName>
        <ecNumber evidence="1">6.3.5.7</ecNumber>
    </recommendedName>
</protein>
<sequence>MSYIKKLRARLDSGEISAVELTKEYLAKIKEQDKRINSIITLCEAEALKEAEDADAIISAGKQGLLTGIPILHKDLFCTKGIRTTAASKMLDNFVAPYDSTVTKNCKDQGMVTLGKLNMDEFAMGSTNEYSYYGAVSNPWDLERVPGGSSGGSAAAVAAGFAPISTGSDTGGSVRQPASFCGLTAMKPSYGSTSRFGMVAFASSFDQAGIFGHYAEDVAIMLDAIAGECEFDSTCVGVKQNHFTQDLEKDISSKVIGVDESLIKDLPAQIQEAVSKTLDNFKKLGAEIKSVKVPDLKEALSTYYIITPAEAAANLARYDGIRYGYRNPEARDLDELYRKSRTDGFGAEVKRRIMIGNYVLASSQYDSYYNKAQQLRKVMTDQINQIFTQVDAIFMPASPSEAFKKGDKLDPVSAYLSDIYTIPANISGLPAIAFPIGFANNLPVGGQLMAKAFNDNILTQMVVQYQKHYGIEEFILQQARI</sequence>
<keyword id="KW-0067">ATP-binding</keyword>
<keyword id="KW-0436">Ligase</keyword>
<keyword id="KW-0547">Nucleotide-binding</keyword>
<keyword id="KW-0648">Protein biosynthesis</keyword>
<keyword id="KW-1185">Reference proteome</keyword>
<name>GATA_FRATH</name>